<proteinExistence type="inferred from homology"/>
<name>CYSG2_CROS8</name>
<gene>
    <name evidence="1" type="primary">cysG2</name>
    <name type="ordered locus">ESA_04366</name>
</gene>
<sequence length="457" mass="50052">MDHLPIFCQLRHRACLLVGGGDVAERKARLLLEAGAALTVNALAFAPQFKAWAKQGMLRLVQGEFNASLLDDCWLAIAATDDDAVNNQVSEAAEARRIFCNVVDAPKQASFIMPSIIDRSPLMVAISSGGTSPVLARLLREKLEALLPQHLGKVAGYAGQLRRRVKQTFTSMSERRRFWEKFFVNDRLAQSLANDDEQAVTRITETLLSEPLDDRGEVVLVGAGPGDPGLLTLKGLQQIQQADIVVYDRLVSDEIMNLVRRDADRVFVGKRAGYHCVPQEEINQILLREAQRGKRVVRLKGGDPFIFGRGGEELETLCDAGIPFSVVPGITAASGCSAYAGLPLTHRDYAQSVRLITGHLKNGGEFDWHNLAAEKQTLVFYMGLNQAAAIQEKLIEHGMDPQMPVALVENGTSVKQRVVAGVLTELGALAQRVESPSLIIVGRVVALRDKLNWFSSK</sequence>
<organism>
    <name type="scientific">Cronobacter sakazakii (strain ATCC BAA-894)</name>
    <name type="common">Enterobacter sakazakii</name>
    <dbReference type="NCBI Taxonomy" id="290339"/>
    <lineage>
        <taxon>Bacteria</taxon>
        <taxon>Pseudomonadati</taxon>
        <taxon>Pseudomonadota</taxon>
        <taxon>Gammaproteobacteria</taxon>
        <taxon>Enterobacterales</taxon>
        <taxon>Enterobacteriaceae</taxon>
        <taxon>Cronobacter</taxon>
    </lineage>
</organism>
<evidence type="ECO:0000255" key="1">
    <source>
        <dbReference type="HAMAP-Rule" id="MF_01646"/>
    </source>
</evidence>
<keyword id="KW-0169">Cobalamin biosynthesis</keyword>
<keyword id="KW-0456">Lyase</keyword>
<keyword id="KW-0489">Methyltransferase</keyword>
<keyword id="KW-0511">Multifunctional enzyme</keyword>
<keyword id="KW-0520">NAD</keyword>
<keyword id="KW-0560">Oxidoreductase</keyword>
<keyword id="KW-0597">Phosphoprotein</keyword>
<keyword id="KW-0627">Porphyrin biosynthesis</keyword>
<keyword id="KW-1185">Reference proteome</keyword>
<keyword id="KW-0949">S-adenosyl-L-methionine</keyword>
<keyword id="KW-0808">Transferase</keyword>
<feature type="chain" id="PRO_0000330503" description="Siroheme synthase 2">
    <location>
        <begin position="1"/>
        <end position="457"/>
    </location>
</feature>
<feature type="region of interest" description="Precorrin-2 dehydrogenase /sirohydrochlorin ferrochelatase" evidence="1">
    <location>
        <begin position="1"/>
        <end position="204"/>
    </location>
</feature>
<feature type="region of interest" description="Uroporphyrinogen-III C-methyltransferase" evidence="1">
    <location>
        <begin position="216"/>
        <end position="457"/>
    </location>
</feature>
<feature type="active site" description="Proton acceptor" evidence="1">
    <location>
        <position position="248"/>
    </location>
</feature>
<feature type="active site" description="Proton donor" evidence="1">
    <location>
        <position position="270"/>
    </location>
</feature>
<feature type="binding site" evidence="1">
    <location>
        <begin position="22"/>
        <end position="23"/>
    </location>
    <ligand>
        <name>NAD(+)</name>
        <dbReference type="ChEBI" id="CHEBI:57540"/>
    </ligand>
</feature>
<feature type="binding site" evidence="1">
    <location>
        <begin position="43"/>
        <end position="44"/>
    </location>
    <ligand>
        <name>NAD(+)</name>
        <dbReference type="ChEBI" id="CHEBI:57540"/>
    </ligand>
</feature>
<feature type="binding site" evidence="1">
    <location>
        <position position="225"/>
    </location>
    <ligand>
        <name>S-adenosyl-L-methionine</name>
        <dbReference type="ChEBI" id="CHEBI:59789"/>
    </ligand>
</feature>
<feature type="binding site" evidence="1">
    <location>
        <begin position="301"/>
        <end position="303"/>
    </location>
    <ligand>
        <name>S-adenosyl-L-methionine</name>
        <dbReference type="ChEBI" id="CHEBI:59789"/>
    </ligand>
</feature>
<feature type="binding site" evidence="1">
    <location>
        <position position="306"/>
    </location>
    <ligand>
        <name>S-adenosyl-L-methionine</name>
        <dbReference type="ChEBI" id="CHEBI:59789"/>
    </ligand>
</feature>
<feature type="binding site" evidence="1">
    <location>
        <begin position="331"/>
        <end position="332"/>
    </location>
    <ligand>
        <name>S-adenosyl-L-methionine</name>
        <dbReference type="ChEBI" id="CHEBI:59789"/>
    </ligand>
</feature>
<feature type="binding site" evidence="1">
    <location>
        <position position="382"/>
    </location>
    <ligand>
        <name>S-adenosyl-L-methionine</name>
        <dbReference type="ChEBI" id="CHEBI:59789"/>
    </ligand>
</feature>
<feature type="binding site" evidence="1">
    <location>
        <position position="411"/>
    </location>
    <ligand>
        <name>S-adenosyl-L-methionine</name>
        <dbReference type="ChEBI" id="CHEBI:59789"/>
    </ligand>
</feature>
<feature type="modified residue" description="Phosphoserine" evidence="1">
    <location>
        <position position="128"/>
    </location>
</feature>
<comment type="function">
    <text evidence="1">Multifunctional enzyme that catalyzes the SAM-dependent methylations of uroporphyrinogen III at position C-2 and C-7 to form precorrin-2 via precorrin-1. Then it catalyzes the NAD-dependent ring dehydrogenation of precorrin-2 to yield sirohydrochlorin. Finally, it catalyzes the ferrochelation of sirohydrochlorin to yield siroheme.</text>
</comment>
<comment type="catalytic activity">
    <reaction evidence="1">
        <text>uroporphyrinogen III + 2 S-adenosyl-L-methionine = precorrin-2 + 2 S-adenosyl-L-homocysteine + H(+)</text>
        <dbReference type="Rhea" id="RHEA:32459"/>
        <dbReference type="ChEBI" id="CHEBI:15378"/>
        <dbReference type="ChEBI" id="CHEBI:57308"/>
        <dbReference type="ChEBI" id="CHEBI:57856"/>
        <dbReference type="ChEBI" id="CHEBI:58827"/>
        <dbReference type="ChEBI" id="CHEBI:59789"/>
        <dbReference type="EC" id="2.1.1.107"/>
    </reaction>
</comment>
<comment type="catalytic activity">
    <reaction evidence="1">
        <text>precorrin-2 + NAD(+) = sirohydrochlorin + NADH + 2 H(+)</text>
        <dbReference type="Rhea" id="RHEA:15613"/>
        <dbReference type="ChEBI" id="CHEBI:15378"/>
        <dbReference type="ChEBI" id="CHEBI:57540"/>
        <dbReference type="ChEBI" id="CHEBI:57945"/>
        <dbReference type="ChEBI" id="CHEBI:58351"/>
        <dbReference type="ChEBI" id="CHEBI:58827"/>
        <dbReference type="EC" id="1.3.1.76"/>
    </reaction>
</comment>
<comment type="catalytic activity">
    <reaction evidence="1">
        <text>siroheme + 2 H(+) = sirohydrochlorin + Fe(2+)</text>
        <dbReference type="Rhea" id="RHEA:24360"/>
        <dbReference type="ChEBI" id="CHEBI:15378"/>
        <dbReference type="ChEBI" id="CHEBI:29033"/>
        <dbReference type="ChEBI" id="CHEBI:58351"/>
        <dbReference type="ChEBI" id="CHEBI:60052"/>
        <dbReference type="EC" id="4.99.1.4"/>
    </reaction>
</comment>
<comment type="pathway">
    <text evidence="1">Cofactor biosynthesis; adenosylcobalamin biosynthesis; precorrin-2 from uroporphyrinogen III: step 1/1.</text>
</comment>
<comment type="pathway">
    <text evidence="1">Cofactor biosynthesis; adenosylcobalamin biosynthesis; sirohydrochlorin from precorrin-2: step 1/1.</text>
</comment>
<comment type="pathway">
    <text evidence="1">Porphyrin-containing compound metabolism; siroheme biosynthesis; precorrin-2 from uroporphyrinogen III: step 1/1.</text>
</comment>
<comment type="pathway">
    <text evidence="1">Porphyrin-containing compound metabolism; siroheme biosynthesis; siroheme from sirohydrochlorin: step 1/1.</text>
</comment>
<comment type="pathway">
    <text evidence="1">Porphyrin-containing compound metabolism; siroheme biosynthesis; sirohydrochlorin from precorrin-2: step 1/1.</text>
</comment>
<comment type="similarity">
    <text evidence="1">In the N-terminal section; belongs to the precorrin-2 dehydrogenase / sirohydrochlorin ferrochelatase family.</text>
</comment>
<comment type="similarity">
    <text evidence="1">In the C-terminal section; belongs to the precorrin methyltransferase family.</text>
</comment>
<dbReference type="EC" id="2.1.1.107" evidence="1"/>
<dbReference type="EC" id="1.3.1.76" evidence="1"/>
<dbReference type="EC" id="4.99.1.4" evidence="1"/>
<dbReference type="EMBL" id="CP000783">
    <property type="protein sequence ID" value="ABU79545.1"/>
    <property type="molecule type" value="Genomic_DNA"/>
</dbReference>
<dbReference type="SMR" id="A7MKK9"/>
<dbReference type="KEGG" id="esa:ESA_04366"/>
<dbReference type="PATRIC" id="fig|290339.8.peg.3891"/>
<dbReference type="HOGENOM" id="CLU_011276_2_1_6"/>
<dbReference type="UniPathway" id="UPA00148">
    <property type="reaction ID" value="UER00211"/>
</dbReference>
<dbReference type="UniPathway" id="UPA00148">
    <property type="reaction ID" value="UER00222"/>
</dbReference>
<dbReference type="UniPathway" id="UPA00262">
    <property type="reaction ID" value="UER00211"/>
</dbReference>
<dbReference type="UniPathway" id="UPA00262">
    <property type="reaction ID" value="UER00222"/>
</dbReference>
<dbReference type="UniPathway" id="UPA00262">
    <property type="reaction ID" value="UER00376"/>
</dbReference>
<dbReference type="Proteomes" id="UP000000260">
    <property type="component" value="Chromosome"/>
</dbReference>
<dbReference type="GO" id="GO:0051287">
    <property type="term" value="F:NAD binding"/>
    <property type="evidence" value="ECO:0007669"/>
    <property type="project" value="InterPro"/>
</dbReference>
<dbReference type="GO" id="GO:0043115">
    <property type="term" value="F:precorrin-2 dehydrogenase activity"/>
    <property type="evidence" value="ECO:0007669"/>
    <property type="project" value="UniProtKB-UniRule"/>
</dbReference>
<dbReference type="GO" id="GO:0051266">
    <property type="term" value="F:sirohydrochlorin ferrochelatase activity"/>
    <property type="evidence" value="ECO:0007669"/>
    <property type="project" value="UniProtKB-EC"/>
</dbReference>
<dbReference type="GO" id="GO:0004851">
    <property type="term" value="F:uroporphyrin-III C-methyltransferase activity"/>
    <property type="evidence" value="ECO:0007669"/>
    <property type="project" value="UniProtKB-UniRule"/>
</dbReference>
<dbReference type="GO" id="GO:0009236">
    <property type="term" value="P:cobalamin biosynthetic process"/>
    <property type="evidence" value="ECO:0007669"/>
    <property type="project" value="UniProtKB-UniRule"/>
</dbReference>
<dbReference type="GO" id="GO:0032259">
    <property type="term" value="P:methylation"/>
    <property type="evidence" value="ECO:0007669"/>
    <property type="project" value="UniProtKB-KW"/>
</dbReference>
<dbReference type="GO" id="GO:0019354">
    <property type="term" value="P:siroheme biosynthetic process"/>
    <property type="evidence" value="ECO:0007669"/>
    <property type="project" value="UniProtKB-UniRule"/>
</dbReference>
<dbReference type="CDD" id="cd11642">
    <property type="entry name" value="SUMT"/>
    <property type="match status" value="1"/>
</dbReference>
<dbReference type="FunFam" id="1.10.8.210:FF:000001">
    <property type="entry name" value="Siroheme synthase"/>
    <property type="match status" value="1"/>
</dbReference>
<dbReference type="FunFam" id="3.30.160.110:FF:000001">
    <property type="entry name" value="Siroheme synthase"/>
    <property type="match status" value="1"/>
</dbReference>
<dbReference type="FunFam" id="3.30.950.10:FF:000001">
    <property type="entry name" value="Siroheme synthase"/>
    <property type="match status" value="1"/>
</dbReference>
<dbReference type="FunFam" id="3.40.1010.10:FF:000001">
    <property type="entry name" value="Siroheme synthase"/>
    <property type="match status" value="1"/>
</dbReference>
<dbReference type="FunFam" id="3.40.50.720:FF:000092">
    <property type="entry name" value="Siroheme synthase"/>
    <property type="match status" value="1"/>
</dbReference>
<dbReference type="Gene3D" id="3.40.1010.10">
    <property type="entry name" value="Cobalt-precorrin-4 Transmethylase, Domain 1"/>
    <property type="match status" value="1"/>
</dbReference>
<dbReference type="Gene3D" id="3.30.950.10">
    <property type="entry name" value="Methyltransferase, Cobalt-precorrin-4 Transmethylase, Domain 2"/>
    <property type="match status" value="1"/>
</dbReference>
<dbReference type="Gene3D" id="3.40.50.720">
    <property type="entry name" value="NAD(P)-binding Rossmann-like Domain"/>
    <property type="match status" value="1"/>
</dbReference>
<dbReference type="Gene3D" id="1.10.8.210">
    <property type="entry name" value="Sirohaem synthase, dimerisation domain"/>
    <property type="match status" value="1"/>
</dbReference>
<dbReference type="Gene3D" id="3.30.160.110">
    <property type="entry name" value="Siroheme synthase, domain 2"/>
    <property type="match status" value="1"/>
</dbReference>
<dbReference type="HAMAP" id="MF_01646">
    <property type="entry name" value="Siroheme_synth"/>
    <property type="match status" value="1"/>
</dbReference>
<dbReference type="InterPro" id="IPR000878">
    <property type="entry name" value="4pyrrol_Mease"/>
</dbReference>
<dbReference type="InterPro" id="IPR035996">
    <property type="entry name" value="4pyrrol_Methylase_sf"/>
</dbReference>
<dbReference type="InterPro" id="IPR014777">
    <property type="entry name" value="4pyrrole_Mease_sub1"/>
</dbReference>
<dbReference type="InterPro" id="IPR014776">
    <property type="entry name" value="4pyrrole_Mease_sub2"/>
</dbReference>
<dbReference type="InterPro" id="IPR006366">
    <property type="entry name" value="CobA/CysG_C"/>
</dbReference>
<dbReference type="InterPro" id="IPR036291">
    <property type="entry name" value="NAD(P)-bd_dom_sf"/>
</dbReference>
<dbReference type="InterPro" id="IPR050161">
    <property type="entry name" value="Siro_Cobalamin_biosynth"/>
</dbReference>
<dbReference type="InterPro" id="IPR037115">
    <property type="entry name" value="Sirohaem_synt_dimer_dom_sf"/>
</dbReference>
<dbReference type="InterPro" id="IPR012409">
    <property type="entry name" value="Sirohaem_synth"/>
</dbReference>
<dbReference type="InterPro" id="IPR028281">
    <property type="entry name" value="Sirohaem_synthase_central"/>
</dbReference>
<dbReference type="InterPro" id="IPR019478">
    <property type="entry name" value="Sirohaem_synthase_dimer_dom"/>
</dbReference>
<dbReference type="InterPro" id="IPR006367">
    <property type="entry name" value="Sirohaem_synthase_N"/>
</dbReference>
<dbReference type="InterPro" id="IPR003043">
    <property type="entry name" value="Uropor_MeTrfase_CS"/>
</dbReference>
<dbReference type="NCBIfam" id="TIGR01469">
    <property type="entry name" value="cobA_cysG_Cterm"/>
    <property type="match status" value="1"/>
</dbReference>
<dbReference type="NCBIfam" id="TIGR01470">
    <property type="entry name" value="cysG_Nterm"/>
    <property type="match status" value="1"/>
</dbReference>
<dbReference type="NCBIfam" id="NF004790">
    <property type="entry name" value="PRK06136.1"/>
    <property type="match status" value="1"/>
</dbReference>
<dbReference type="NCBIfam" id="NF007922">
    <property type="entry name" value="PRK10637.1"/>
    <property type="match status" value="1"/>
</dbReference>
<dbReference type="PANTHER" id="PTHR45790:SF1">
    <property type="entry name" value="SIROHEME SYNTHASE"/>
    <property type="match status" value="1"/>
</dbReference>
<dbReference type="PANTHER" id="PTHR45790">
    <property type="entry name" value="SIROHEME SYNTHASE-RELATED"/>
    <property type="match status" value="1"/>
</dbReference>
<dbReference type="Pfam" id="PF10414">
    <property type="entry name" value="CysG_dimeriser"/>
    <property type="match status" value="1"/>
</dbReference>
<dbReference type="Pfam" id="PF13241">
    <property type="entry name" value="NAD_binding_7"/>
    <property type="match status" value="1"/>
</dbReference>
<dbReference type="Pfam" id="PF14824">
    <property type="entry name" value="Sirohm_synth_M"/>
    <property type="match status" value="1"/>
</dbReference>
<dbReference type="Pfam" id="PF00590">
    <property type="entry name" value="TP_methylase"/>
    <property type="match status" value="1"/>
</dbReference>
<dbReference type="PIRSF" id="PIRSF036426">
    <property type="entry name" value="Sirohaem_synth"/>
    <property type="match status" value="1"/>
</dbReference>
<dbReference type="SUPFAM" id="SSF51735">
    <property type="entry name" value="NAD(P)-binding Rossmann-fold domains"/>
    <property type="match status" value="1"/>
</dbReference>
<dbReference type="SUPFAM" id="SSF75615">
    <property type="entry name" value="Siroheme synthase middle domains-like"/>
    <property type="match status" value="1"/>
</dbReference>
<dbReference type="SUPFAM" id="SSF53790">
    <property type="entry name" value="Tetrapyrrole methylase"/>
    <property type="match status" value="1"/>
</dbReference>
<dbReference type="PROSITE" id="PS00839">
    <property type="entry name" value="SUMT_1"/>
    <property type="match status" value="1"/>
</dbReference>
<dbReference type="PROSITE" id="PS00840">
    <property type="entry name" value="SUMT_2"/>
    <property type="match status" value="1"/>
</dbReference>
<reference key="1">
    <citation type="journal article" date="2010" name="PLoS ONE">
        <title>Genome sequence of Cronobacter sakazakii BAA-894 and comparative genomic hybridization analysis with other Cronobacter species.</title>
        <authorList>
            <person name="Kucerova E."/>
            <person name="Clifton S.W."/>
            <person name="Xia X.Q."/>
            <person name="Long F."/>
            <person name="Porwollik S."/>
            <person name="Fulton L."/>
            <person name="Fronick C."/>
            <person name="Minx P."/>
            <person name="Kyung K."/>
            <person name="Warren W."/>
            <person name="Fulton R."/>
            <person name="Feng D."/>
            <person name="Wollam A."/>
            <person name="Shah N."/>
            <person name="Bhonagiri V."/>
            <person name="Nash W.E."/>
            <person name="Hallsworth-Pepin K."/>
            <person name="Wilson R.K."/>
            <person name="McClelland M."/>
            <person name="Forsythe S.J."/>
        </authorList>
    </citation>
    <scope>NUCLEOTIDE SEQUENCE [LARGE SCALE GENOMIC DNA]</scope>
    <source>
        <strain>ATCC BAA-894</strain>
    </source>
</reference>
<accession>A7MKK9</accession>
<protein>
    <recommendedName>
        <fullName evidence="1">Siroheme synthase 2</fullName>
    </recommendedName>
    <domain>
        <recommendedName>
            <fullName evidence="1">Uroporphyrinogen-III C-methyltransferase 2</fullName>
            <shortName evidence="1">Urogen III methylase 2</shortName>
            <ecNumber evidence="1">2.1.1.107</ecNumber>
        </recommendedName>
        <alternativeName>
            <fullName evidence="1">SUMT 2</fullName>
        </alternativeName>
        <alternativeName>
            <fullName evidence="1">Uroporphyrinogen III methylase 2</fullName>
            <shortName evidence="1">UROM 2</shortName>
        </alternativeName>
    </domain>
    <domain>
        <recommendedName>
            <fullName evidence="1">Precorrin-2 dehydrogenase 2</fullName>
            <ecNumber evidence="1">1.3.1.76</ecNumber>
        </recommendedName>
    </domain>
    <domain>
        <recommendedName>
            <fullName evidence="1">Sirohydrochlorin ferrochelatase 2</fullName>
            <ecNumber evidence="1">4.99.1.4</ecNumber>
        </recommendedName>
    </domain>
</protein>